<gene>
    <name evidence="1" type="primary">thyA</name>
    <name type="ordered locus">LVIS_0784</name>
</gene>
<keyword id="KW-0963">Cytoplasm</keyword>
<keyword id="KW-0489">Methyltransferase</keyword>
<keyword id="KW-0545">Nucleotide biosynthesis</keyword>
<keyword id="KW-1185">Reference proteome</keyword>
<keyword id="KW-0808">Transferase</keyword>
<accession>Q03S95</accession>
<proteinExistence type="inferred from homology"/>
<sequence length="316" mass="35955">MLEEAYLDLAKTVLTTGHEKTDRTGTGTISLFGYQMRFNLQEGFPLLTTKKVPFGLIKSELLWFLRGDTNIRFLLQHHNHIWDEWAFQRYVDSPEYHGPDMTDFGRRSLVDADFNQRYQAEKKAFCDRIVTDQAFGDHFGDLGLVYGSQWRAWQGHQGETIDQLANVIETLRTHPDSRRMIVSAWNPADVPSMALPPCHTLFQFYVNDGKLSCQLYQRSADIFLGVPFNIASYALLTSLIAKEVGLEVGDFVHTLGDAHIYSNHVEQIKTQLARTPHAAPQLWLNPDKSSIFDYEMSDIKVTGYDPEPAIKAPVAV</sequence>
<dbReference type="EC" id="2.1.1.45" evidence="1"/>
<dbReference type="EMBL" id="CP000416">
    <property type="protein sequence ID" value="ABJ63927.1"/>
    <property type="molecule type" value="Genomic_DNA"/>
</dbReference>
<dbReference type="RefSeq" id="WP_011667558.1">
    <property type="nucleotide sequence ID" value="NC_008497.1"/>
</dbReference>
<dbReference type="SMR" id="Q03S95"/>
<dbReference type="STRING" id="387344.LVIS_0784"/>
<dbReference type="KEGG" id="lbr:LVIS_0784"/>
<dbReference type="PATRIC" id="fig|387344.15.peg.759"/>
<dbReference type="eggNOG" id="COG0207">
    <property type="taxonomic scope" value="Bacteria"/>
</dbReference>
<dbReference type="HOGENOM" id="CLU_021669_0_0_9"/>
<dbReference type="UniPathway" id="UPA00575"/>
<dbReference type="Proteomes" id="UP000001652">
    <property type="component" value="Chromosome"/>
</dbReference>
<dbReference type="GO" id="GO:0005829">
    <property type="term" value="C:cytosol"/>
    <property type="evidence" value="ECO:0007669"/>
    <property type="project" value="TreeGrafter"/>
</dbReference>
<dbReference type="GO" id="GO:0004799">
    <property type="term" value="F:thymidylate synthase activity"/>
    <property type="evidence" value="ECO:0007669"/>
    <property type="project" value="UniProtKB-UniRule"/>
</dbReference>
<dbReference type="GO" id="GO:0006231">
    <property type="term" value="P:dTMP biosynthetic process"/>
    <property type="evidence" value="ECO:0007669"/>
    <property type="project" value="UniProtKB-UniRule"/>
</dbReference>
<dbReference type="GO" id="GO:0006235">
    <property type="term" value="P:dTTP biosynthetic process"/>
    <property type="evidence" value="ECO:0007669"/>
    <property type="project" value="UniProtKB-UniRule"/>
</dbReference>
<dbReference type="GO" id="GO:0032259">
    <property type="term" value="P:methylation"/>
    <property type="evidence" value="ECO:0007669"/>
    <property type="project" value="UniProtKB-KW"/>
</dbReference>
<dbReference type="CDD" id="cd00351">
    <property type="entry name" value="TS_Pyrimidine_HMase"/>
    <property type="match status" value="1"/>
</dbReference>
<dbReference type="Gene3D" id="3.30.572.10">
    <property type="entry name" value="Thymidylate synthase/dCMP hydroxymethylase domain"/>
    <property type="match status" value="1"/>
</dbReference>
<dbReference type="HAMAP" id="MF_00008">
    <property type="entry name" value="Thymidy_synth_bact"/>
    <property type="match status" value="1"/>
</dbReference>
<dbReference type="InterPro" id="IPR045097">
    <property type="entry name" value="Thymidate_synth/dCMP_Mease"/>
</dbReference>
<dbReference type="InterPro" id="IPR023451">
    <property type="entry name" value="Thymidate_synth/dCMP_Mease_dom"/>
</dbReference>
<dbReference type="InterPro" id="IPR036926">
    <property type="entry name" value="Thymidate_synth/dCMP_Mease_sf"/>
</dbReference>
<dbReference type="InterPro" id="IPR000398">
    <property type="entry name" value="Thymidylate_synthase"/>
</dbReference>
<dbReference type="InterPro" id="IPR020940">
    <property type="entry name" value="Thymidylate_synthase_AS"/>
</dbReference>
<dbReference type="NCBIfam" id="NF002496">
    <property type="entry name" value="PRK01827.1-2"/>
    <property type="match status" value="1"/>
</dbReference>
<dbReference type="NCBIfam" id="TIGR03284">
    <property type="entry name" value="thym_sym"/>
    <property type="match status" value="1"/>
</dbReference>
<dbReference type="PANTHER" id="PTHR11548:SF9">
    <property type="entry name" value="THYMIDYLATE SYNTHASE"/>
    <property type="match status" value="1"/>
</dbReference>
<dbReference type="PANTHER" id="PTHR11548">
    <property type="entry name" value="THYMIDYLATE SYNTHASE 1"/>
    <property type="match status" value="1"/>
</dbReference>
<dbReference type="Pfam" id="PF00303">
    <property type="entry name" value="Thymidylat_synt"/>
    <property type="match status" value="1"/>
</dbReference>
<dbReference type="PRINTS" id="PR00108">
    <property type="entry name" value="THYMDSNTHASE"/>
</dbReference>
<dbReference type="SUPFAM" id="SSF55831">
    <property type="entry name" value="Thymidylate synthase/dCMP hydroxymethylase"/>
    <property type="match status" value="1"/>
</dbReference>
<dbReference type="PROSITE" id="PS00091">
    <property type="entry name" value="THYMIDYLATE_SYNTHASE"/>
    <property type="match status" value="1"/>
</dbReference>
<evidence type="ECO:0000255" key="1">
    <source>
        <dbReference type="HAMAP-Rule" id="MF_00008"/>
    </source>
</evidence>
<organism>
    <name type="scientific">Levilactobacillus brevis (strain ATCC 367 / BCRC 12310 / CIP 105137 / JCM 1170 / LMG 11437 / NCIMB 947 / NCTC 947)</name>
    <name type="common">Lactobacillus brevis</name>
    <dbReference type="NCBI Taxonomy" id="387344"/>
    <lineage>
        <taxon>Bacteria</taxon>
        <taxon>Bacillati</taxon>
        <taxon>Bacillota</taxon>
        <taxon>Bacilli</taxon>
        <taxon>Lactobacillales</taxon>
        <taxon>Lactobacillaceae</taxon>
        <taxon>Levilactobacillus</taxon>
    </lineage>
</organism>
<reference key="1">
    <citation type="journal article" date="2006" name="Proc. Natl. Acad. Sci. U.S.A.">
        <title>Comparative genomics of the lactic acid bacteria.</title>
        <authorList>
            <person name="Makarova K.S."/>
            <person name="Slesarev A."/>
            <person name="Wolf Y.I."/>
            <person name="Sorokin A."/>
            <person name="Mirkin B."/>
            <person name="Koonin E.V."/>
            <person name="Pavlov A."/>
            <person name="Pavlova N."/>
            <person name="Karamychev V."/>
            <person name="Polouchine N."/>
            <person name="Shakhova V."/>
            <person name="Grigoriev I."/>
            <person name="Lou Y."/>
            <person name="Rohksar D."/>
            <person name="Lucas S."/>
            <person name="Huang K."/>
            <person name="Goodstein D.M."/>
            <person name="Hawkins T."/>
            <person name="Plengvidhya V."/>
            <person name="Welker D."/>
            <person name="Hughes J."/>
            <person name="Goh Y."/>
            <person name="Benson A."/>
            <person name="Baldwin K."/>
            <person name="Lee J.-H."/>
            <person name="Diaz-Muniz I."/>
            <person name="Dosti B."/>
            <person name="Smeianov V."/>
            <person name="Wechter W."/>
            <person name="Barabote R."/>
            <person name="Lorca G."/>
            <person name="Altermann E."/>
            <person name="Barrangou R."/>
            <person name="Ganesan B."/>
            <person name="Xie Y."/>
            <person name="Rawsthorne H."/>
            <person name="Tamir D."/>
            <person name="Parker C."/>
            <person name="Breidt F."/>
            <person name="Broadbent J.R."/>
            <person name="Hutkins R."/>
            <person name="O'Sullivan D."/>
            <person name="Steele J."/>
            <person name="Unlu G."/>
            <person name="Saier M.H. Jr."/>
            <person name="Klaenhammer T."/>
            <person name="Richardson P."/>
            <person name="Kozyavkin S."/>
            <person name="Weimer B.C."/>
            <person name="Mills D.A."/>
        </authorList>
    </citation>
    <scope>NUCLEOTIDE SEQUENCE [LARGE SCALE GENOMIC DNA]</scope>
    <source>
        <strain>ATCC 367 / BCRC 12310 / CIP 105137 / JCM 1170 / LMG 11437 / NCIMB 947 / NCTC 947</strain>
    </source>
</reference>
<name>TYSY_LEVBA</name>
<protein>
    <recommendedName>
        <fullName evidence="1">Thymidylate synthase</fullName>
        <shortName evidence="1">TS</shortName>
        <shortName evidence="1">TSase</shortName>
        <ecNumber evidence="1">2.1.1.45</ecNumber>
    </recommendedName>
</protein>
<feature type="chain" id="PRO_1000000612" description="Thymidylate synthase">
    <location>
        <begin position="1"/>
        <end position="316"/>
    </location>
</feature>
<feature type="active site" description="Nucleophile" evidence="1">
    <location>
        <position position="198"/>
    </location>
</feature>
<feature type="binding site" description="in other chain" evidence="1">
    <location>
        <position position="23"/>
    </location>
    <ligand>
        <name>dUMP</name>
        <dbReference type="ChEBI" id="CHEBI:246422"/>
        <note>ligand shared between dimeric partners</note>
    </ligand>
</feature>
<feature type="binding site" evidence="1">
    <location>
        <begin position="178"/>
        <end position="179"/>
    </location>
    <ligand>
        <name>dUMP</name>
        <dbReference type="ChEBI" id="CHEBI:246422"/>
        <note>ligand shared between dimeric partners</note>
    </ligand>
</feature>
<feature type="binding site" description="in other chain" evidence="1">
    <location>
        <begin position="218"/>
        <end position="221"/>
    </location>
    <ligand>
        <name>dUMP</name>
        <dbReference type="ChEBI" id="CHEBI:246422"/>
        <note>ligand shared between dimeric partners</note>
    </ligand>
</feature>
<feature type="binding site" evidence="1">
    <location>
        <position position="221"/>
    </location>
    <ligand>
        <name>(6R)-5,10-methylene-5,6,7,8-tetrahydrofolate</name>
        <dbReference type="ChEBI" id="CHEBI:15636"/>
    </ligand>
</feature>
<feature type="binding site" description="in other chain" evidence="1">
    <location>
        <position position="229"/>
    </location>
    <ligand>
        <name>dUMP</name>
        <dbReference type="ChEBI" id="CHEBI:246422"/>
        <note>ligand shared between dimeric partners</note>
    </ligand>
</feature>
<feature type="binding site" description="in other chain" evidence="1">
    <location>
        <begin position="259"/>
        <end position="261"/>
    </location>
    <ligand>
        <name>dUMP</name>
        <dbReference type="ChEBI" id="CHEBI:246422"/>
        <note>ligand shared between dimeric partners</note>
    </ligand>
</feature>
<feature type="binding site" evidence="1">
    <location>
        <position position="315"/>
    </location>
    <ligand>
        <name>(6R)-5,10-methylene-5,6,7,8-tetrahydrofolate</name>
        <dbReference type="ChEBI" id="CHEBI:15636"/>
    </ligand>
</feature>
<comment type="function">
    <text evidence="1">Catalyzes the reductive methylation of 2'-deoxyuridine-5'-monophosphate (dUMP) to 2'-deoxythymidine-5'-monophosphate (dTMP) while utilizing 5,10-methylenetetrahydrofolate (mTHF) as the methyl donor and reductant in the reaction, yielding dihydrofolate (DHF) as a by-product. This enzymatic reaction provides an intracellular de novo source of dTMP, an essential precursor for DNA biosynthesis.</text>
</comment>
<comment type="catalytic activity">
    <reaction evidence="1">
        <text>dUMP + (6R)-5,10-methylene-5,6,7,8-tetrahydrofolate = 7,8-dihydrofolate + dTMP</text>
        <dbReference type="Rhea" id="RHEA:12104"/>
        <dbReference type="ChEBI" id="CHEBI:15636"/>
        <dbReference type="ChEBI" id="CHEBI:57451"/>
        <dbReference type="ChEBI" id="CHEBI:63528"/>
        <dbReference type="ChEBI" id="CHEBI:246422"/>
        <dbReference type="EC" id="2.1.1.45"/>
    </reaction>
</comment>
<comment type="pathway">
    <text evidence="1">Pyrimidine metabolism; dTTP biosynthesis.</text>
</comment>
<comment type="subunit">
    <text evidence="1">Homodimer.</text>
</comment>
<comment type="subcellular location">
    <subcellularLocation>
        <location evidence="1">Cytoplasm</location>
    </subcellularLocation>
</comment>
<comment type="similarity">
    <text evidence="1">Belongs to the thymidylate synthase family. Bacterial-type ThyA subfamily.</text>
</comment>